<reference key="1">
    <citation type="journal article" date="1994" name="Nature">
        <title>2.2 Mb of contiguous nucleotide sequence from chromosome III of C. elegans.</title>
        <authorList>
            <person name="Wilson R."/>
            <person name="Ainscough R."/>
            <person name="Anderson K."/>
            <person name="Baynes C."/>
            <person name="Berks M."/>
            <person name="Bonfield J."/>
            <person name="Burton J."/>
            <person name="Connell M."/>
            <person name="Copsey T."/>
            <person name="Cooper J."/>
            <person name="Coulson A."/>
            <person name="Craxton M."/>
            <person name="Dear S."/>
            <person name="Du Z."/>
            <person name="Durbin R."/>
            <person name="Favello A."/>
            <person name="Fraser A."/>
            <person name="Fulton L."/>
            <person name="Gardner A."/>
            <person name="Green P."/>
            <person name="Hawkins T."/>
            <person name="Hillier L."/>
            <person name="Jier M."/>
            <person name="Johnston L."/>
            <person name="Jones M."/>
            <person name="Kershaw J."/>
            <person name="Kirsten J."/>
            <person name="Laisster N."/>
            <person name="Latreille P."/>
            <person name="Lightning J."/>
            <person name="Lloyd C."/>
            <person name="Mortimore B."/>
            <person name="O'Callaghan M."/>
            <person name="Parsons J."/>
            <person name="Percy C."/>
            <person name="Rifken L."/>
            <person name="Roopra A."/>
            <person name="Saunders D."/>
            <person name="Shownkeen R."/>
            <person name="Sims M."/>
            <person name="Smaldon N."/>
            <person name="Smith A."/>
            <person name="Smith M."/>
            <person name="Sonnhammer E."/>
            <person name="Staden R."/>
            <person name="Sulston J."/>
            <person name="Thierry-Mieg J."/>
            <person name="Thomas K."/>
            <person name="Vaudin M."/>
            <person name="Vaughan K."/>
            <person name="Waterston R."/>
            <person name="Watson A."/>
            <person name="Weinstock L."/>
            <person name="Wilkinson-Sproat J."/>
            <person name="Wohldman P."/>
        </authorList>
    </citation>
    <scope>NUCLEOTIDE SEQUENCE [LARGE SCALE GENOMIC DNA]</scope>
    <source>
        <strain>Bristol N2</strain>
    </source>
</reference>
<reference key="2">
    <citation type="journal article" date="1998" name="Science">
        <title>Genome sequence of the nematode C. elegans: a platform for investigating biology.</title>
        <authorList>
            <consortium name="The C. elegans sequencing consortium"/>
        </authorList>
    </citation>
    <scope>NUCLEOTIDE SEQUENCE [LARGE SCALE GENOMIC DNA]</scope>
    <source>
        <strain>Bristol N2</strain>
    </source>
</reference>
<organism>
    <name type="scientific">Caenorhabditis elegans</name>
    <dbReference type="NCBI Taxonomy" id="6239"/>
    <lineage>
        <taxon>Eukaryota</taxon>
        <taxon>Metazoa</taxon>
        <taxon>Ecdysozoa</taxon>
        <taxon>Nematoda</taxon>
        <taxon>Chromadorea</taxon>
        <taxon>Rhabditida</taxon>
        <taxon>Rhabditina</taxon>
        <taxon>Rhabditomorpha</taxon>
        <taxon>Rhabditoidea</taxon>
        <taxon>Rhabditidae</taxon>
        <taxon>Peloderinae</taxon>
        <taxon>Caenorhabditis</taxon>
    </lineage>
</organism>
<accession>P32740</accession>
<sequence length="307" mass="33890">MDHFIKLLPKLTPHLRKGDCGKMGVIGGSLEYTGAPYFAASSASRLGADLIHIFCDPDAAQVIKGYSPDLIVHPGMTANSIIPKLSRMDAIVIGPGLGRNPNIWPLMQELFEFVRNRDVPFVIDGDGLWFVSEHIEKFPRQMSATVLTPNIVEFSRLCKSALGEEDVLNVRNNSQLQHLAAELSRKMNVTIYLKGEVDLVVTPNGEVSKCSTESSLRRCGGQGDVTAGSLGLFLYWAKKNLGDDWTSAHHEAGIASSWLVRTAGRRAFEKHGRSMNTPLLLDEIPKLVRDVETREMKDTVHTDSSKH</sequence>
<keyword id="KW-0067">ATP-binding</keyword>
<keyword id="KW-0456">Lyase</keyword>
<keyword id="KW-0520">NAD</keyword>
<keyword id="KW-0521">NADP</keyword>
<keyword id="KW-0547">Nucleotide-binding</keyword>
<keyword id="KW-0597">Phosphoprotein</keyword>
<keyword id="KW-1185">Reference proteome</keyword>
<comment type="function">
    <text evidence="1">Catalyzes the dehydration of the S-form of NAD(P)HX at the expense of ATP, which is converted to ADP. Together with NAD(P)HX epimerase, which catalyzes the epimerization of the S- and R-forms, the enzyme allows the repair of both epimers of NAD(P)HX, a damaged form of NAD(P)H that is a result of enzymatic or heat-dependent hydration.</text>
</comment>
<comment type="catalytic activity">
    <reaction evidence="1">
        <text>(6S)-NADHX + ATP = ADP + phosphate + NADH + H(+)</text>
        <dbReference type="Rhea" id="RHEA:19017"/>
        <dbReference type="ChEBI" id="CHEBI:15378"/>
        <dbReference type="ChEBI" id="CHEBI:30616"/>
        <dbReference type="ChEBI" id="CHEBI:43474"/>
        <dbReference type="ChEBI" id="CHEBI:57945"/>
        <dbReference type="ChEBI" id="CHEBI:64074"/>
        <dbReference type="ChEBI" id="CHEBI:456216"/>
        <dbReference type="EC" id="4.2.1.93"/>
    </reaction>
</comment>
<comment type="catalytic activity">
    <reaction>
        <text>(6S)-NADPHX + ATP = ADP + phosphate + NADPH + H(+)</text>
        <dbReference type="Rhea" id="RHEA:32231"/>
        <dbReference type="ChEBI" id="CHEBI:15378"/>
        <dbReference type="ChEBI" id="CHEBI:30616"/>
        <dbReference type="ChEBI" id="CHEBI:43474"/>
        <dbReference type="ChEBI" id="CHEBI:57783"/>
        <dbReference type="ChEBI" id="CHEBI:64076"/>
        <dbReference type="ChEBI" id="CHEBI:456216"/>
        <dbReference type="EC" id="4.2.1.93"/>
    </reaction>
</comment>
<comment type="cofactor">
    <cofactor evidence="1">
        <name>Mg(2+)</name>
        <dbReference type="ChEBI" id="CHEBI:18420"/>
    </cofactor>
</comment>
<comment type="similarity">
    <text evidence="1">Belongs to the NnrD/CARKD family.</text>
</comment>
<evidence type="ECO:0000255" key="1">
    <source>
        <dbReference type="HAMAP-Rule" id="MF_03157"/>
    </source>
</evidence>
<name>NNRD_CAEEL</name>
<gene>
    <name type="ORF">R107.2</name>
</gene>
<dbReference type="EC" id="4.2.1.93" evidence="1"/>
<dbReference type="EMBL" id="Z14092">
    <property type="protein sequence ID" value="CAA78469.2"/>
    <property type="molecule type" value="Genomic_DNA"/>
</dbReference>
<dbReference type="PIR" id="B88546">
    <property type="entry name" value="B88546"/>
</dbReference>
<dbReference type="PIR" id="S30872">
    <property type="entry name" value="S30872"/>
</dbReference>
<dbReference type="RefSeq" id="NP_499001.1">
    <property type="nucleotide sequence ID" value="NM_066600.6"/>
</dbReference>
<dbReference type="SMR" id="P32740"/>
<dbReference type="BioGRID" id="41476">
    <property type="interactions" value="2"/>
</dbReference>
<dbReference type="FunCoup" id="P32740">
    <property type="interactions" value="1169"/>
</dbReference>
<dbReference type="STRING" id="6239.R107.2.1"/>
<dbReference type="PaxDb" id="6239-R107.2"/>
<dbReference type="PeptideAtlas" id="P32740"/>
<dbReference type="EnsemblMetazoa" id="R107.2.1">
    <property type="protein sequence ID" value="R107.2.1"/>
    <property type="gene ID" value="WBGene00011298"/>
</dbReference>
<dbReference type="GeneID" id="176277"/>
<dbReference type="KEGG" id="cel:CELE_R107.2"/>
<dbReference type="UCSC" id="R107.2">
    <property type="organism name" value="c. elegans"/>
</dbReference>
<dbReference type="AGR" id="WB:WBGene00011298"/>
<dbReference type="CTD" id="176277"/>
<dbReference type="WormBase" id="R107.2">
    <property type="protein sequence ID" value="CE23917"/>
    <property type="gene ID" value="WBGene00011298"/>
</dbReference>
<dbReference type="eggNOG" id="KOG3974">
    <property type="taxonomic scope" value="Eukaryota"/>
</dbReference>
<dbReference type="GeneTree" id="ENSGT00390000000917"/>
<dbReference type="HOGENOM" id="CLU_030651_3_0_1"/>
<dbReference type="InParanoid" id="P32740"/>
<dbReference type="OMA" id="WRAAYHN"/>
<dbReference type="OrthoDB" id="8110916at2759"/>
<dbReference type="PhylomeDB" id="P32740"/>
<dbReference type="Reactome" id="R-CEL-197264">
    <property type="pathway name" value="Nicotinamide salvaging"/>
</dbReference>
<dbReference type="PRO" id="PR:P32740"/>
<dbReference type="Proteomes" id="UP000001940">
    <property type="component" value="Chromosome III"/>
</dbReference>
<dbReference type="Bgee" id="WBGene00011298">
    <property type="expression patterns" value="Expressed in germ line (C elegans) and 4 other cell types or tissues"/>
</dbReference>
<dbReference type="GO" id="GO:0005524">
    <property type="term" value="F:ATP binding"/>
    <property type="evidence" value="ECO:0007669"/>
    <property type="project" value="UniProtKB-KW"/>
</dbReference>
<dbReference type="GO" id="GO:0047453">
    <property type="term" value="F:ATP-dependent NAD(P)H-hydrate dehydratase activity"/>
    <property type="evidence" value="ECO:0000318"/>
    <property type="project" value="GO_Central"/>
</dbReference>
<dbReference type="GO" id="GO:0110051">
    <property type="term" value="P:metabolite repair"/>
    <property type="evidence" value="ECO:0000318"/>
    <property type="project" value="GO_Central"/>
</dbReference>
<dbReference type="GO" id="GO:0046496">
    <property type="term" value="P:nicotinamide nucleotide metabolic process"/>
    <property type="evidence" value="ECO:0007669"/>
    <property type="project" value="UniProtKB-UniRule"/>
</dbReference>
<dbReference type="CDD" id="cd01171">
    <property type="entry name" value="YXKO-related"/>
    <property type="match status" value="1"/>
</dbReference>
<dbReference type="FunFam" id="3.40.1190.20:FF:000091">
    <property type="entry name" value="ATP-dependent (S)-NAD(P)H-hydrate dehydratase"/>
    <property type="match status" value="1"/>
</dbReference>
<dbReference type="Gene3D" id="3.40.1190.20">
    <property type="match status" value="1"/>
</dbReference>
<dbReference type="HAMAP" id="MF_01965">
    <property type="entry name" value="NADHX_dehydratase"/>
    <property type="match status" value="1"/>
</dbReference>
<dbReference type="InterPro" id="IPR017953">
    <property type="entry name" value="Carbohydrate_kinase_pred_CS"/>
</dbReference>
<dbReference type="InterPro" id="IPR000631">
    <property type="entry name" value="CARKD"/>
</dbReference>
<dbReference type="InterPro" id="IPR029056">
    <property type="entry name" value="Ribokinase-like"/>
</dbReference>
<dbReference type="NCBIfam" id="TIGR00196">
    <property type="entry name" value="yjeF_cterm"/>
    <property type="match status" value="1"/>
</dbReference>
<dbReference type="PANTHER" id="PTHR12592:SF0">
    <property type="entry name" value="ATP-DEPENDENT (S)-NAD(P)H-HYDRATE DEHYDRATASE"/>
    <property type="match status" value="1"/>
</dbReference>
<dbReference type="PANTHER" id="PTHR12592">
    <property type="entry name" value="ATP-DEPENDENT (S)-NAD(P)H-HYDRATE DEHYDRATASE FAMILY MEMBER"/>
    <property type="match status" value="1"/>
</dbReference>
<dbReference type="Pfam" id="PF01256">
    <property type="entry name" value="Carb_kinase"/>
    <property type="match status" value="1"/>
</dbReference>
<dbReference type="SUPFAM" id="SSF53613">
    <property type="entry name" value="Ribokinase-like"/>
    <property type="match status" value="1"/>
</dbReference>
<dbReference type="PROSITE" id="PS01049">
    <property type="entry name" value="YJEF_C_1"/>
    <property type="match status" value="1"/>
</dbReference>
<dbReference type="PROSITE" id="PS01050">
    <property type="entry name" value="YJEF_C_2"/>
    <property type="match status" value="1"/>
</dbReference>
<dbReference type="PROSITE" id="PS51383">
    <property type="entry name" value="YJEF_C_3"/>
    <property type="match status" value="1"/>
</dbReference>
<feature type="chain" id="PRO_0000119052" description="ATP-dependent (S)-NAD(P)H-hydrate dehydratase">
    <location>
        <begin position="1"/>
        <end position="307"/>
    </location>
</feature>
<feature type="domain" description="YjeF C-terminal" evidence="1">
    <location>
        <begin position="1"/>
        <end position="291"/>
    </location>
</feature>
<feature type="binding site" evidence="1">
    <location>
        <position position="96"/>
    </location>
    <ligand>
        <name>(6S)-NADPHX</name>
        <dbReference type="ChEBI" id="CHEBI:64076"/>
    </ligand>
</feature>
<feature type="binding site" evidence="1">
    <location>
        <begin position="150"/>
        <end position="156"/>
    </location>
    <ligand>
        <name>(6S)-NADPHX</name>
        <dbReference type="ChEBI" id="CHEBI:64076"/>
    </ligand>
</feature>
<feature type="binding site" evidence="1">
    <location>
        <begin position="194"/>
        <end position="198"/>
    </location>
    <ligand>
        <name>ATP</name>
        <dbReference type="ChEBI" id="CHEBI:30616"/>
    </ligand>
</feature>
<feature type="binding site" evidence="1">
    <location>
        <begin position="214"/>
        <end position="223"/>
    </location>
    <ligand>
        <name>ATP</name>
        <dbReference type="ChEBI" id="CHEBI:30616"/>
    </ligand>
</feature>
<feature type="binding site" evidence="1">
    <location>
        <position position="224"/>
    </location>
    <ligand>
        <name>(6S)-NADPHX</name>
        <dbReference type="ChEBI" id="CHEBI:64076"/>
    </ligand>
</feature>
<protein>
    <recommendedName>
        <fullName evidence="1">ATP-dependent (S)-NAD(P)H-hydrate dehydratase</fullName>
        <ecNumber evidence="1">4.2.1.93</ecNumber>
    </recommendedName>
    <alternativeName>
        <fullName evidence="1">ATP-dependent NAD(P)HX dehydratase</fullName>
    </alternativeName>
</protein>
<proteinExistence type="inferred from homology"/>